<reference key="1">
    <citation type="journal article" date="1986" name="Nature">
        <title>Chloroplast gene organization deduced from complete sequence of liverwort Marchantia polymorpha chloroplast DNA.</title>
        <authorList>
            <person name="Ohyama K."/>
            <person name="Fukuzawa H."/>
            <person name="Kohchi T."/>
            <person name="Shirai H."/>
            <person name="Sano T."/>
            <person name="Sano S."/>
            <person name="Umesono K."/>
            <person name="Shiki Y."/>
            <person name="Takeuchi M."/>
            <person name="Chang Z."/>
            <person name="Aota S."/>
            <person name="Inokuchi H."/>
            <person name="Ozeki H."/>
        </authorList>
    </citation>
    <scope>NUCLEOTIDE SEQUENCE [LARGE SCALE GENOMIC DNA]</scope>
</reference>
<feature type="chain" id="PRO_0000217426" description="Uncharacterized 3.3 kDa protein in psbT-psbN intergenic region">
    <location>
        <begin position="1"/>
        <end position="27"/>
    </location>
</feature>
<accession>Q32620</accession>
<protein>
    <recommendedName>
        <fullName>Uncharacterized 3.3 kDa protein in psbT-psbN intergenic region</fullName>
    </recommendedName>
    <alternativeName>
        <fullName>ORF27</fullName>
    </alternativeName>
</protein>
<name>YCX2_MARPO</name>
<dbReference type="EMBL" id="X04465">
    <property type="protein sequence ID" value="CAA28112.1"/>
    <property type="molecule type" value="Genomic_DNA"/>
</dbReference>
<dbReference type="PIR" id="A05058">
    <property type="entry name" value="A05058"/>
</dbReference>
<dbReference type="RefSeq" id="NP_039327.1">
    <property type="nucleotide sequence ID" value="NC_001319.1"/>
</dbReference>
<dbReference type="GeneID" id="2702608"/>
<dbReference type="GO" id="GO:0009507">
    <property type="term" value="C:chloroplast"/>
    <property type="evidence" value="ECO:0007669"/>
    <property type="project" value="UniProtKB-SubCell"/>
</dbReference>
<comment type="subcellular location">
    <subcellularLocation>
        <location>Plastid</location>
        <location>Chloroplast</location>
    </subcellularLocation>
</comment>
<sequence>MFFKWISKFIRRLSKCGIKSITSKAYK</sequence>
<organism>
    <name type="scientific">Marchantia polymorpha</name>
    <name type="common">Common liverwort</name>
    <name type="synonym">Marchantia aquatica</name>
    <dbReference type="NCBI Taxonomy" id="3197"/>
    <lineage>
        <taxon>Eukaryota</taxon>
        <taxon>Viridiplantae</taxon>
        <taxon>Streptophyta</taxon>
        <taxon>Embryophyta</taxon>
        <taxon>Marchantiophyta</taxon>
        <taxon>Marchantiopsida</taxon>
        <taxon>Marchantiidae</taxon>
        <taxon>Marchantiales</taxon>
        <taxon>Marchantiaceae</taxon>
        <taxon>Marchantia</taxon>
    </lineage>
</organism>
<proteinExistence type="predicted"/>
<geneLocation type="chloroplast"/>
<keyword id="KW-0150">Chloroplast</keyword>
<keyword id="KW-0934">Plastid</keyword>